<reference key="1">
    <citation type="journal article" date="2007" name="J. Bacteriol.">
        <title>The genome sequence of avian pathogenic Escherichia coli strain O1:K1:H7 shares strong similarities with human extraintestinal pathogenic E. coli genomes.</title>
        <authorList>
            <person name="Johnson T.J."/>
            <person name="Kariyawasam S."/>
            <person name="Wannemuehler Y."/>
            <person name="Mangiamele P."/>
            <person name="Johnson S.J."/>
            <person name="Doetkott C."/>
            <person name="Skyberg J.A."/>
            <person name="Lynne A.M."/>
            <person name="Johnson J.R."/>
            <person name="Nolan L.K."/>
        </authorList>
    </citation>
    <scope>NUCLEOTIDE SEQUENCE [LARGE SCALE GENOMIC DNA]</scope>
</reference>
<sequence length="266" mass="29774">MRLIPLTTAEQVGKWAARHIVNRINAFKPTADRPFVLGLPTGGTPMTTYKALVEMHKAGQVSFKHVVTFNMDEYVGLPKEHPESYYSFMHRNFFDHVDIPAENINLLNGNAPDIDAECRQYEEKIRSYGKIHLFMGGVGNDGHIAFNEPASSLASRTRIKTLTHDTRVANSRFFDNDVNQVPKYALTVGVGTLLDAEEVMILVLGSQKALALQAAVEGCVNHMWTISCLQLHPKAIMVCDEPSTMELKVKTLRYFNELEAENIKGL</sequence>
<name>NAGB_ECOK1</name>
<keyword id="KW-0021">Allosteric enzyme</keyword>
<keyword id="KW-0119">Carbohydrate metabolism</keyword>
<keyword id="KW-1015">Disulfide bond</keyword>
<keyword id="KW-0378">Hydrolase</keyword>
<keyword id="KW-1185">Reference proteome</keyword>
<organism>
    <name type="scientific">Escherichia coli O1:K1 / APEC</name>
    <dbReference type="NCBI Taxonomy" id="405955"/>
    <lineage>
        <taxon>Bacteria</taxon>
        <taxon>Pseudomonadati</taxon>
        <taxon>Pseudomonadota</taxon>
        <taxon>Gammaproteobacteria</taxon>
        <taxon>Enterobacterales</taxon>
        <taxon>Enterobacteriaceae</taxon>
        <taxon>Escherichia</taxon>
    </lineage>
</organism>
<gene>
    <name evidence="1" type="primary">nagB</name>
    <name type="ordered locus">Ecok1_05830</name>
    <name type="ORF">APECO1_1394</name>
</gene>
<feature type="chain" id="PRO_1000066979" description="Glucosamine-6-phosphate deaminase">
    <location>
        <begin position="1"/>
        <end position="266"/>
    </location>
</feature>
<feature type="active site" description="Proton acceptor; for enolization step" evidence="1">
    <location>
        <position position="72"/>
    </location>
</feature>
<feature type="active site" description="For ring-opening step" evidence="1">
    <location>
        <position position="141"/>
    </location>
</feature>
<feature type="active site" description="Proton acceptor; for ring-opening step" evidence="1">
    <location>
        <position position="143"/>
    </location>
</feature>
<feature type="active site" description="For ring-opening step" evidence="1">
    <location>
        <position position="148"/>
    </location>
</feature>
<feature type="site" description="Part of the allosteric site" evidence="1">
    <location>
        <position position="151"/>
    </location>
</feature>
<feature type="site" description="Part of the allosteric site" evidence="1">
    <location>
        <position position="158"/>
    </location>
</feature>
<feature type="site" description="Part of the allosteric site" evidence="1">
    <location>
        <position position="160"/>
    </location>
</feature>
<feature type="site" description="Part of the allosteric site" evidence="1">
    <location>
        <position position="161"/>
    </location>
</feature>
<feature type="site" description="Part of the allosteric site" evidence="1">
    <location>
        <position position="254"/>
    </location>
</feature>
<feature type="disulfide bond" description="Interchain" evidence="1">
    <location>
        <position position="219"/>
    </location>
</feature>
<protein>
    <recommendedName>
        <fullName evidence="1">Glucosamine-6-phosphate deaminase</fullName>
        <ecNumber evidence="1">3.5.99.6</ecNumber>
    </recommendedName>
    <alternativeName>
        <fullName evidence="1">GlcN6P deaminase</fullName>
        <shortName evidence="1">GNPDA</shortName>
    </alternativeName>
    <alternativeName>
        <fullName evidence="1">Glucosamine-6-phosphate isomerase</fullName>
    </alternativeName>
</protein>
<accession>A1A8T7</accession>
<dbReference type="EC" id="3.5.99.6" evidence="1"/>
<dbReference type="EMBL" id="CP000468">
    <property type="protein sequence ID" value="ABJ00077.1"/>
    <property type="molecule type" value="Genomic_DNA"/>
</dbReference>
<dbReference type="RefSeq" id="WP_001237072.1">
    <property type="nucleotide sequence ID" value="NZ_CADILS010000005.1"/>
</dbReference>
<dbReference type="SMR" id="A1A8T7"/>
<dbReference type="GeneID" id="93776807"/>
<dbReference type="KEGG" id="ecv:APECO1_1394"/>
<dbReference type="HOGENOM" id="CLU_049611_0_1_6"/>
<dbReference type="UniPathway" id="UPA00629">
    <property type="reaction ID" value="UER00684"/>
</dbReference>
<dbReference type="Proteomes" id="UP000008216">
    <property type="component" value="Chromosome"/>
</dbReference>
<dbReference type="GO" id="GO:0005829">
    <property type="term" value="C:cytosol"/>
    <property type="evidence" value="ECO:0007669"/>
    <property type="project" value="TreeGrafter"/>
</dbReference>
<dbReference type="GO" id="GO:0004342">
    <property type="term" value="F:glucosamine-6-phosphate deaminase activity"/>
    <property type="evidence" value="ECO:0007669"/>
    <property type="project" value="UniProtKB-UniRule"/>
</dbReference>
<dbReference type="GO" id="GO:0042802">
    <property type="term" value="F:identical protein binding"/>
    <property type="evidence" value="ECO:0007669"/>
    <property type="project" value="TreeGrafter"/>
</dbReference>
<dbReference type="GO" id="GO:0005975">
    <property type="term" value="P:carbohydrate metabolic process"/>
    <property type="evidence" value="ECO:0007669"/>
    <property type="project" value="InterPro"/>
</dbReference>
<dbReference type="GO" id="GO:0006043">
    <property type="term" value="P:glucosamine catabolic process"/>
    <property type="evidence" value="ECO:0007669"/>
    <property type="project" value="TreeGrafter"/>
</dbReference>
<dbReference type="GO" id="GO:0006046">
    <property type="term" value="P:N-acetylglucosamine catabolic process"/>
    <property type="evidence" value="ECO:0007669"/>
    <property type="project" value="TreeGrafter"/>
</dbReference>
<dbReference type="GO" id="GO:0019262">
    <property type="term" value="P:N-acetylneuraminate catabolic process"/>
    <property type="evidence" value="ECO:0007669"/>
    <property type="project" value="UniProtKB-UniRule"/>
</dbReference>
<dbReference type="CDD" id="cd01399">
    <property type="entry name" value="GlcN6P_deaminase"/>
    <property type="match status" value="1"/>
</dbReference>
<dbReference type="FunFam" id="3.40.50.1360:FF:000002">
    <property type="entry name" value="Glucosamine-6-phosphate deaminase"/>
    <property type="match status" value="1"/>
</dbReference>
<dbReference type="Gene3D" id="3.40.50.1360">
    <property type="match status" value="1"/>
</dbReference>
<dbReference type="HAMAP" id="MF_01241">
    <property type="entry name" value="GlcN6P_deamin"/>
    <property type="match status" value="1"/>
</dbReference>
<dbReference type="InterPro" id="IPR006148">
    <property type="entry name" value="Glc/Gal-6P_isomerase"/>
</dbReference>
<dbReference type="InterPro" id="IPR004547">
    <property type="entry name" value="Glucosamine6P_isomerase"/>
</dbReference>
<dbReference type="InterPro" id="IPR018321">
    <property type="entry name" value="Glucosamine6P_isomerase_CS"/>
</dbReference>
<dbReference type="InterPro" id="IPR037171">
    <property type="entry name" value="NagB/RpiA_transferase-like"/>
</dbReference>
<dbReference type="NCBIfam" id="TIGR00502">
    <property type="entry name" value="nagB"/>
    <property type="match status" value="1"/>
</dbReference>
<dbReference type="NCBIfam" id="NF001685">
    <property type="entry name" value="PRK00443.1-5"/>
    <property type="match status" value="1"/>
</dbReference>
<dbReference type="PANTHER" id="PTHR11280">
    <property type="entry name" value="GLUCOSAMINE-6-PHOSPHATE ISOMERASE"/>
    <property type="match status" value="1"/>
</dbReference>
<dbReference type="PANTHER" id="PTHR11280:SF5">
    <property type="entry name" value="GLUCOSAMINE-6-PHOSPHATE ISOMERASE"/>
    <property type="match status" value="1"/>
</dbReference>
<dbReference type="Pfam" id="PF01182">
    <property type="entry name" value="Glucosamine_iso"/>
    <property type="match status" value="1"/>
</dbReference>
<dbReference type="SUPFAM" id="SSF100950">
    <property type="entry name" value="NagB/RpiA/CoA transferase-like"/>
    <property type="match status" value="1"/>
</dbReference>
<dbReference type="PROSITE" id="PS01161">
    <property type="entry name" value="GLC_GALNAC_ISOMERASE"/>
    <property type="match status" value="1"/>
</dbReference>
<proteinExistence type="inferred from homology"/>
<evidence type="ECO:0000255" key="1">
    <source>
        <dbReference type="HAMAP-Rule" id="MF_01241"/>
    </source>
</evidence>
<comment type="function">
    <text evidence="1">Catalyzes the reversible isomerization-deamination of glucosamine 6-phosphate (GlcN6P) to form fructose 6-phosphate (Fru6P) and ammonium ion.</text>
</comment>
<comment type="catalytic activity">
    <reaction evidence="1">
        <text>alpha-D-glucosamine 6-phosphate + H2O = beta-D-fructose 6-phosphate + NH4(+)</text>
        <dbReference type="Rhea" id="RHEA:12172"/>
        <dbReference type="ChEBI" id="CHEBI:15377"/>
        <dbReference type="ChEBI" id="CHEBI:28938"/>
        <dbReference type="ChEBI" id="CHEBI:57634"/>
        <dbReference type="ChEBI" id="CHEBI:75989"/>
        <dbReference type="EC" id="3.5.99.6"/>
    </reaction>
</comment>
<comment type="activity regulation">
    <text evidence="1">Allosterically activated by N-acetylglucosamine 6-phosphate (GlcNAc6P).</text>
</comment>
<comment type="pathway">
    <text evidence="1">Amino-sugar metabolism; N-acetylneuraminate degradation; D-fructose 6-phosphate from N-acetylneuraminate: step 5/5.</text>
</comment>
<comment type="subunit">
    <text evidence="1">Homohexamer; trimer of disulfide-linked dimers.</text>
</comment>
<comment type="similarity">
    <text evidence="1">Belongs to the glucosamine/galactosamine-6-phosphate isomerase family. NagB subfamily.</text>
</comment>